<accession>Q58155</accession>
<name>Y745_METJA</name>
<keyword id="KW-1185">Reference proteome</keyword>
<gene>
    <name type="ordered locus">MJ0745</name>
</gene>
<organism>
    <name type="scientific">Methanocaldococcus jannaschii (strain ATCC 43067 / DSM 2661 / JAL-1 / JCM 10045 / NBRC 100440)</name>
    <name type="common">Methanococcus jannaschii</name>
    <dbReference type="NCBI Taxonomy" id="243232"/>
    <lineage>
        <taxon>Archaea</taxon>
        <taxon>Methanobacteriati</taxon>
        <taxon>Methanobacteriota</taxon>
        <taxon>Methanomada group</taxon>
        <taxon>Methanococci</taxon>
        <taxon>Methanococcales</taxon>
        <taxon>Methanocaldococcaceae</taxon>
        <taxon>Methanocaldococcus</taxon>
    </lineage>
</organism>
<protein>
    <recommendedName>
        <fullName>Uncharacterized protein MJ0745</fullName>
    </recommendedName>
</protein>
<dbReference type="EMBL" id="L77117">
    <property type="protein sequence ID" value="AAB98745.1"/>
    <property type="molecule type" value="Genomic_DNA"/>
</dbReference>
<dbReference type="PIR" id="A64393">
    <property type="entry name" value="A64393"/>
</dbReference>
<dbReference type="SMR" id="Q58155"/>
<dbReference type="STRING" id="243232.MJ_0745"/>
<dbReference type="PaxDb" id="243232-MJ_0745"/>
<dbReference type="EnsemblBacteria" id="AAB98745">
    <property type="protein sequence ID" value="AAB98745"/>
    <property type="gene ID" value="MJ_0745"/>
</dbReference>
<dbReference type="KEGG" id="mja:MJ_0745"/>
<dbReference type="eggNOG" id="arCOG01688">
    <property type="taxonomic scope" value="Archaea"/>
</dbReference>
<dbReference type="HOGENOM" id="CLU_1551833_0_0_2"/>
<dbReference type="InParanoid" id="Q58155"/>
<dbReference type="PhylomeDB" id="Q58155"/>
<dbReference type="Proteomes" id="UP000000805">
    <property type="component" value="Chromosome"/>
</dbReference>
<dbReference type="Gene3D" id="3.30.1380.20">
    <property type="entry name" value="Trafficking protein particle complex subunit 3"/>
    <property type="match status" value="1"/>
</dbReference>
<dbReference type="InterPro" id="IPR024096">
    <property type="entry name" value="NO_sig/Golgi_transp_ligand-bd"/>
</dbReference>
<dbReference type="InterPro" id="IPR004096">
    <property type="entry name" value="V4R"/>
</dbReference>
<dbReference type="PANTHER" id="PTHR35090:SF2">
    <property type="entry name" value="ARSR FAMILY TRANSCRIPTIONAL REGULATOR"/>
    <property type="match status" value="1"/>
</dbReference>
<dbReference type="PANTHER" id="PTHR35090">
    <property type="entry name" value="DNA-DIRECTED RNA POLYMERASE SUBUNIT I"/>
    <property type="match status" value="1"/>
</dbReference>
<dbReference type="Pfam" id="PF02830">
    <property type="entry name" value="V4R"/>
    <property type="match status" value="1"/>
</dbReference>
<dbReference type="SMART" id="SM00989">
    <property type="entry name" value="V4R"/>
    <property type="match status" value="1"/>
</dbReference>
<dbReference type="SUPFAM" id="SSF111126">
    <property type="entry name" value="Ligand-binding domain in the NO signalling and Golgi transport"/>
    <property type="match status" value="1"/>
</dbReference>
<reference key="1">
    <citation type="journal article" date="1996" name="Science">
        <title>Complete genome sequence of the methanogenic archaeon, Methanococcus jannaschii.</title>
        <authorList>
            <person name="Bult C.J."/>
            <person name="White O."/>
            <person name="Olsen G.J."/>
            <person name="Zhou L."/>
            <person name="Fleischmann R.D."/>
            <person name="Sutton G.G."/>
            <person name="Blake J.A."/>
            <person name="FitzGerald L.M."/>
            <person name="Clayton R.A."/>
            <person name="Gocayne J.D."/>
            <person name="Kerlavage A.R."/>
            <person name="Dougherty B.A."/>
            <person name="Tomb J.-F."/>
            <person name="Adams M.D."/>
            <person name="Reich C.I."/>
            <person name="Overbeek R."/>
            <person name="Kirkness E.F."/>
            <person name="Weinstock K.G."/>
            <person name="Merrick J.M."/>
            <person name="Glodek A."/>
            <person name="Scott J.L."/>
            <person name="Geoghagen N.S.M."/>
            <person name="Weidman J.F."/>
            <person name="Fuhrmann J.L."/>
            <person name="Nguyen D."/>
            <person name="Utterback T.R."/>
            <person name="Kelley J.M."/>
            <person name="Peterson J.D."/>
            <person name="Sadow P.W."/>
            <person name="Hanna M.C."/>
            <person name="Cotton M.D."/>
            <person name="Roberts K.M."/>
            <person name="Hurst M.A."/>
            <person name="Kaine B.P."/>
            <person name="Borodovsky M."/>
            <person name="Klenk H.-P."/>
            <person name="Fraser C.M."/>
            <person name="Smith H.O."/>
            <person name="Woese C.R."/>
            <person name="Venter J.C."/>
        </authorList>
    </citation>
    <scope>NUCLEOTIDE SEQUENCE [LARGE SCALE GENOMIC DNA]</scope>
    <source>
        <strain>ATCC 43067 / DSM 2661 / JAL-1 / JCM 10045 / NBRC 100440</strain>
    </source>
</reference>
<feature type="chain" id="PRO_0000107012" description="Uncharacterized protein MJ0745">
    <location>
        <begin position="1"/>
        <end position="181"/>
    </location>
</feature>
<evidence type="ECO:0000305" key="1"/>
<sequence>MKNMRVELKTKDMKEFYKIFSESEFIITDDSKLINETVNYLKKKYKNSTTKKKLIPLDLFKAIVLIMMKKIKELDSEITLYDIGYEFGKHLNPKRYSDLKKFFKENNLGTLKVDSRKPLVLKVENCSFCEDLSFEEPICYFDAGLIAGAYECILKKPVVVDEIKCMARGDDACYFKVEVVK</sequence>
<proteinExistence type="inferred from homology"/>
<comment type="similarity">
    <text evidence="1">Belongs to the M.jannaschii MJ0150/MJ0739/MJ0745/MJ1460/MJ1642 family.</text>
</comment>